<feature type="chain" id="PRO_0000340229" description="Putative uncharacterized protein PSMG3-AS1">
    <location>
        <begin position="1"/>
        <end position="264"/>
    </location>
</feature>
<feature type="region of interest" description="Disordered" evidence="1">
    <location>
        <begin position="57"/>
        <end position="264"/>
    </location>
</feature>
<feature type="compositionally biased region" description="Basic residues" evidence="1">
    <location>
        <begin position="140"/>
        <end position="153"/>
    </location>
</feature>
<feature type="compositionally biased region" description="Low complexity" evidence="1">
    <location>
        <begin position="154"/>
        <end position="165"/>
    </location>
</feature>
<feature type="sequence variant" id="VAR_044007" description="In dbSNP:rs7800178.">
    <original>T</original>
    <variation>TRWGRHHCPFSKVRKQRLREVQQLLPQLLRCRTAVPGVPELSLPEPSAPALLSEPWPSQSKPGSGCSEALGLVNPSCLGPGPPPGGDPEGCS</variation>
    <location>
        <position position="264"/>
    </location>
</feature>
<dbReference type="EMBL" id="AB067495">
    <property type="protein sequence ID" value="BAB67801.1"/>
    <property type="status" value="ALT_INIT"/>
    <property type="molecule type" value="mRNA"/>
</dbReference>
<dbReference type="EMBL" id="AK091044">
    <property type="status" value="NOT_ANNOTATED_CDS"/>
    <property type="molecule type" value="mRNA"/>
</dbReference>
<dbReference type="EMBL" id="AK092212">
    <property type="status" value="NOT_ANNOTATED_CDS"/>
    <property type="molecule type" value="mRNA"/>
</dbReference>
<dbReference type="EMBL" id="CH471144">
    <property type="protein sequence ID" value="EAW87215.1"/>
    <property type="molecule type" value="Genomic_DNA"/>
</dbReference>
<dbReference type="GlyGen" id="Q96PY0">
    <property type="glycosylation" value="1 site, 1 O-linked glycan (1 site)"/>
</dbReference>
<dbReference type="BioMuta" id="HGNC:22230"/>
<dbReference type="MassIVE" id="Q96PY0"/>
<dbReference type="ProteomicsDB" id="77785"/>
<dbReference type="AGR" id="HGNC:22230"/>
<dbReference type="GeneCards" id="PSMG3-AS1"/>
<dbReference type="HGNC" id="HGNC:22230">
    <property type="gene designation" value="PSMG3-AS1"/>
</dbReference>
<dbReference type="neXtProt" id="NX_Q96PY0"/>
<dbReference type="InParanoid" id="Q96PY0"/>
<dbReference type="PAN-GO" id="Q96PY0">
    <property type="GO annotations" value="0 GO annotations based on evolutionary models"/>
</dbReference>
<dbReference type="ChiTaRS" id="PSMG3-AS1">
    <property type="organism name" value="human"/>
</dbReference>
<dbReference type="Pharos" id="Q96PY0">
    <property type="development level" value="Tdark"/>
</dbReference>
<dbReference type="Proteomes" id="UP000005640">
    <property type="component" value="Unplaced"/>
</dbReference>
<dbReference type="RNAct" id="Q96PY0">
    <property type="molecule type" value="protein"/>
</dbReference>
<reference key="1">
    <citation type="journal article" date="2001" name="DNA Res.">
        <title>Prediction of the coding sequences of unidentified human genes. XXI. The complete sequences of 60 new cDNA clones from brain which code for large proteins.</title>
        <authorList>
            <person name="Nagase T."/>
            <person name="Kikuno R."/>
            <person name="Ohara O."/>
        </authorList>
    </citation>
    <scope>NUCLEOTIDE SEQUENCE [LARGE SCALE MRNA]</scope>
    <source>
        <tissue>Brain</tissue>
    </source>
</reference>
<reference key="2">
    <citation type="journal article" date="2004" name="Nat. Genet.">
        <title>Complete sequencing and characterization of 21,243 full-length human cDNAs.</title>
        <authorList>
            <person name="Ota T."/>
            <person name="Suzuki Y."/>
            <person name="Nishikawa T."/>
            <person name="Otsuki T."/>
            <person name="Sugiyama T."/>
            <person name="Irie R."/>
            <person name="Wakamatsu A."/>
            <person name="Hayashi K."/>
            <person name="Sato H."/>
            <person name="Nagai K."/>
            <person name="Kimura K."/>
            <person name="Makita H."/>
            <person name="Sekine M."/>
            <person name="Obayashi M."/>
            <person name="Nishi T."/>
            <person name="Shibahara T."/>
            <person name="Tanaka T."/>
            <person name="Ishii S."/>
            <person name="Yamamoto J."/>
            <person name="Saito K."/>
            <person name="Kawai Y."/>
            <person name="Isono Y."/>
            <person name="Nakamura Y."/>
            <person name="Nagahari K."/>
            <person name="Murakami K."/>
            <person name="Yasuda T."/>
            <person name="Iwayanagi T."/>
            <person name="Wagatsuma M."/>
            <person name="Shiratori A."/>
            <person name="Sudo H."/>
            <person name="Hosoiri T."/>
            <person name="Kaku Y."/>
            <person name="Kodaira H."/>
            <person name="Kondo H."/>
            <person name="Sugawara M."/>
            <person name="Takahashi M."/>
            <person name="Kanda K."/>
            <person name="Yokoi T."/>
            <person name="Furuya T."/>
            <person name="Kikkawa E."/>
            <person name="Omura Y."/>
            <person name="Abe K."/>
            <person name="Kamihara K."/>
            <person name="Katsuta N."/>
            <person name="Sato K."/>
            <person name="Tanikawa M."/>
            <person name="Yamazaki M."/>
            <person name="Ninomiya K."/>
            <person name="Ishibashi T."/>
            <person name="Yamashita H."/>
            <person name="Murakawa K."/>
            <person name="Fujimori K."/>
            <person name="Tanai H."/>
            <person name="Kimata M."/>
            <person name="Watanabe M."/>
            <person name="Hiraoka S."/>
            <person name="Chiba Y."/>
            <person name="Ishida S."/>
            <person name="Ono Y."/>
            <person name="Takiguchi S."/>
            <person name="Watanabe S."/>
            <person name="Yosida M."/>
            <person name="Hotuta T."/>
            <person name="Kusano J."/>
            <person name="Kanehori K."/>
            <person name="Takahashi-Fujii A."/>
            <person name="Hara H."/>
            <person name="Tanase T.-O."/>
            <person name="Nomura Y."/>
            <person name="Togiya S."/>
            <person name="Komai F."/>
            <person name="Hara R."/>
            <person name="Takeuchi K."/>
            <person name="Arita M."/>
            <person name="Imose N."/>
            <person name="Musashino K."/>
            <person name="Yuuki H."/>
            <person name="Oshima A."/>
            <person name="Sasaki N."/>
            <person name="Aotsuka S."/>
            <person name="Yoshikawa Y."/>
            <person name="Matsunawa H."/>
            <person name="Ichihara T."/>
            <person name="Shiohata N."/>
            <person name="Sano S."/>
            <person name="Moriya S."/>
            <person name="Momiyama H."/>
            <person name="Satoh N."/>
            <person name="Takami S."/>
            <person name="Terashima Y."/>
            <person name="Suzuki O."/>
            <person name="Nakagawa S."/>
            <person name="Senoh A."/>
            <person name="Mizoguchi H."/>
            <person name="Goto Y."/>
            <person name="Shimizu F."/>
            <person name="Wakebe H."/>
            <person name="Hishigaki H."/>
            <person name="Watanabe T."/>
            <person name="Sugiyama A."/>
            <person name="Takemoto M."/>
            <person name="Kawakami B."/>
            <person name="Yamazaki M."/>
            <person name="Watanabe K."/>
            <person name="Kumagai A."/>
            <person name="Itakura S."/>
            <person name="Fukuzumi Y."/>
            <person name="Fujimori Y."/>
            <person name="Komiyama M."/>
            <person name="Tashiro H."/>
            <person name="Tanigami A."/>
            <person name="Fujiwara T."/>
            <person name="Ono T."/>
            <person name="Yamada K."/>
            <person name="Fujii Y."/>
            <person name="Ozaki K."/>
            <person name="Hirao M."/>
            <person name="Ohmori Y."/>
            <person name="Kawabata A."/>
            <person name="Hikiji T."/>
            <person name="Kobatake N."/>
            <person name="Inagaki H."/>
            <person name="Ikema Y."/>
            <person name="Okamoto S."/>
            <person name="Okitani R."/>
            <person name="Kawakami T."/>
            <person name="Noguchi S."/>
            <person name="Itoh T."/>
            <person name="Shigeta K."/>
            <person name="Senba T."/>
            <person name="Matsumura K."/>
            <person name="Nakajima Y."/>
            <person name="Mizuno T."/>
            <person name="Morinaga M."/>
            <person name="Sasaki M."/>
            <person name="Togashi T."/>
            <person name="Oyama M."/>
            <person name="Hata H."/>
            <person name="Watanabe M."/>
            <person name="Komatsu T."/>
            <person name="Mizushima-Sugano J."/>
            <person name="Satoh T."/>
            <person name="Shirai Y."/>
            <person name="Takahashi Y."/>
            <person name="Nakagawa K."/>
            <person name="Okumura K."/>
            <person name="Nagase T."/>
            <person name="Nomura N."/>
            <person name="Kikuchi H."/>
            <person name="Masuho Y."/>
            <person name="Yamashita R."/>
            <person name="Nakai K."/>
            <person name="Yada T."/>
            <person name="Nakamura Y."/>
            <person name="Ohara O."/>
            <person name="Isogai T."/>
            <person name="Sugano S."/>
        </authorList>
    </citation>
    <scope>NUCLEOTIDE SEQUENCE [LARGE SCALE MRNA]</scope>
    <source>
        <tissue>Brain</tissue>
        <tissue>Teratocarcinoma</tissue>
    </source>
</reference>
<reference key="3">
    <citation type="submission" date="2005-07" db="EMBL/GenBank/DDBJ databases">
        <authorList>
            <person name="Mural R.J."/>
            <person name="Istrail S."/>
            <person name="Sutton G.G."/>
            <person name="Florea L."/>
            <person name="Halpern A.L."/>
            <person name="Mobarry C.M."/>
            <person name="Lippert R."/>
            <person name="Walenz B."/>
            <person name="Shatkay H."/>
            <person name="Dew I."/>
            <person name="Miller J.R."/>
            <person name="Flanigan M.J."/>
            <person name="Edwards N.J."/>
            <person name="Bolanos R."/>
            <person name="Fasulo D."/>
            <person name="Halldorsson B.V."/>
            <person name="Hannenhalli S."/>
            <person name="Turner R."/>
            <person name="Yooseph S."/>
            <person name="Lu F."/>
            <person name="Nusskern D.R."/>
            <person name="Shue B.C."/>
            <person name="Zheng X.H."/>
            <person name="Zhong F."/>
            <person name="Delcher A.L."/>
            <person name="Huson D.H."/>
            <person name="Kravitz S.A."/>
            <person name="Mouchard L."/>
            <person name="Reinert K."/>
            <person name="Remington K.A."/>
            <person name="Clark A.G."/>
            <person name="Waterman M.S."/>
            <person name="Eichler E.E."/>
            <person name="Adams M.D."/>
            <person name="Hunkapiller M.W."/>
            <person name="Myers E.W."/>
            <person name="Venter J.C."/>
        </authorList>
    </citation>
    <scope>NUCLEOTIDE SEQUENCE [LARGE SCALE GENOMIC DNA]</scope>
</reference>
<proteinExistence type="uncertain"/>
<protein>
    <recommendedName>
        <fullName>Putative uncharacterized protein PSMG3-AS1</fullName>
    </recommendedName>
    <alternativeName>
        <fullName>PSMG3 antisense RNA 1</fullName>
    </alternativeName>
</protein>
<gene>
    <name type="primary">PSMG3-AS1</name>
    <name type="synonym">KIAA1908</name>
</gene>
<name>K1908_HUMAN</name>
<organism>
    <name type="scientific">Homo sapiens</name>
    <name type="common">Human</name>
    <dbReference type="NCBI Taxonomy" id="9606"/>
    <lineage>
        <taxon>Eukaryota</taxon>
        <taxon>Metazoa</taxon>
        <taxon>Chordata</taxon>
        <taxon>Craniata</taxon>
        <taxon>Vertebrata</taxon>
        <taxon>Euteleostomi</taxon>
        <taxon>Mammalia</taxon>
        <taxon>Eutheria</taxon>
        <taxon>Euarchontoglires</taxon>
        <taxon>Primates</taxon>
        <taxon>Haplorrhini</taxon>
        <taxon>Catarrhini</taxon>
        <taxon>Hominidae</taxon>
        <taxon>Homo</taxon>
    </lineage>
</organism>
<comment type="caution">
    <text evidence="2">Product of a dubious CDS prediction. May be a non-coding RNA.</text>
</comment>
<comment type="sequence caution" evidence="2">
    <conflict type="erroneous initiation">
        <sequence resource="EMBL-CDS" id="BAB67801"/>
    </conflict>
    <text>Extended N-terminus.</text>
</comment>
<sequence>MMDCTWTLPGMRATWQPAPFLPWDQTPWRVSFSWSPVLLAWGGVWSGEAHPCAHVLRPPASPCPPRPRRGCGDSGSSGMAQRAQAGSNQSRGKCGRDGRCPPRSSPGAPEAAERVESAETRGPGKSWILSPSSMSEPRRGKARRSPGRRRHPHSSFPQASSPSSPSRRETIPQVQSSGVPGAMSPEQTLFSRSPRGLSHLGQSLCRTVKESEAQRGKTMPPGSHSPSGAGQGRTARKGPAREEIPSSDSSAKPSVYPHPHLTAT</sequence>
<evidence type="ECO:0000256" key="1">
    <source>
        <dbReference type="SAM" id="MobiDB-lite"/>
    </source>
</evidence>
<evidence type="ECO:0000305" key="2"/>
<keyword id="KW-1185">Reference proteome</keyword>
<accession>Q96PY0</accession>
<accession>Q8NAR8</accession>
<accession>Q8NBC0</accession>